<gene>
    <name type="primary">Rps5</name>
</gene>
<proteinExistence type="evidence at protein level"/>
<dbReference type="EMBL" id="X58465">
    <property type="protein sequence ID" value="CAA41379.1"/>
    <property type="molecule type" value="mRNA"/>
</dbReference>
<dbReference type="PIR" id="A45059">
    <property type="entry name" value="R3RT5"/>
</dbReference>
<dbReference type="SMR" id="P24050"/>
<dbReference type="FunCoup" id="P24050">
    <property type="interactions" value="2392"/>
</dbReference>
<dbReference type="IntAct" id="P24050">
    <property type="interactions" value="2"/>
</dbReference>
<dbReference type="STRING" id="10116.ENSRNOP00000026528"/>
<dbReference type="iPTMnet" id="P24050"/>
<dbReference type="PhosphoSitePlus" id="P24050"/>
<dbReference type="jPOST" id="P24050"/>
<dbReference type="PaxDb" id="10116-ENSRNOP00000026528"/>
<dbReference type="UCSC" id="RGD:3601">
    <property type="organism name" value="rat"/>
</dbReference>
<dbReference type="AGR" id="RGD:3601"/>
<dbReference type="RGD" id="3601">
    <property type="gene designation" value="Rps5"/>
</dbReference>
<dbReference type="eggNOG" id="KOG3291">
    <property type="taxonomic scope" value="Eukaryota"/>
</dbReference>
<dbReference type="InParanoid" id="P24050"/>
<dbReference type="PhylomeDB" id="P24050"/>
<dbReference type="Reactome" id="R-RNO-156827">
    <property type="pathway name" value="L13a-mediated translational silencing of Ceruloplasmin expression"/>
</dbReference>
<dbReference type="Reactome" id="R-RNO-1799339">
    <property type="pathway name" value="SRP-dependent cotranslational protein targeting to membrane"/>
</dbReference>
<dbReference type="Reactome" id="R-RNO-6791226">
    <property type="pathway name" value="Major pathway of rRNA processing in the nucleolus and cytosol"/>
</dbReference>
<dbReference type="Reactome" id="R-RNO-72649">
    <property type="pathway name" value="Translation initiation complex formation"/>
</dbReference>
<dbReference type="Reactome" id="R-RNO-72689">
    <property type="pathway name" value="Formation of a pool of free 40S subunits"/>
</dbReference>
<dbReference type="Reactome" id="R-RNO-72695">
    <property type="pathway name" value="Formation of the ternary complex, and subsequently, the 43S complex"/>
</dbReference>
<dbReference type="Reactome" id="R-RNO-72702">
    <property type="pathway name" value="Ribosomal scanning and start codon recognition"/>
</dbReference>
<dbReference type="Reactome" id="R-RNO-72706">
    <property type="pathway name" value="GTP hydrolysis and joining of the 60S ribosomal subunit"/>
</dbReference>
<dbReference type="Reactome" id="R-RNO-975956">
    <property type="pathway name" value="Nonsense Mediated Decay (NMD) independent of the Exon Junction Complex (EJC)"/>
</dbReference>
<dbReference type="Reactome" id="R-RNO-975957">
    <property type="pathway name" value="Nonsense Mediated Decay (NMD) enhanced by the Exon Junction Complex (EJC)"/>
</dbReference>
<dbReference type="PRO" id="PR:P24050"/>
<dbReference type="Proteomes" id="UP000002494">
    <property type="component" value="Unplaced"/>
</dbReference>
<dbReference type="GO" id="GO:0022626">
    <property type="term" value="C:cytosolic ribosome"/>
    <property type="evidence" value="ECO:0000266"/>
    <property type="project" value="RGD"/>
</dbReference>
<dbReference type="GO" id="GO:0022627">
    <property type="term" value="C:cytosolic small ribosomal subunit"/>
    <property type="evidence" value="ECO:0000314"/>
    <property type="project" value="RGD"/>
</dbReference>
<dbReference type="GO" id="GO:0005730">
    <property type="term" value="C:nucleolus"/>
    <property type="evidence" value="ECO:0007669"/>
    <property type="project" value="UniProtKB-SubCell"/>
</dbReference>
<dbReference type="GO" id="GO:1990904">
    <property type="term" value="C:ribonucleoprotein complex"/>
    <property type="evidence" value="ECO:0000266"/>
    <property type="project" value="RGD"/>
</dbReference>
<dbReference type="GO" id="GO:0005840">
    <property type="term" value="C:ribosome"/>
    <property type="evidence" value="ECO:0000318"/>
    <property type="project" value="GO_Central"/>
</dbReference>
<dbReference type="GO" id="GO:0032040">
    <property type="term" value="C:small-subunit processome"/>
    <property type="evidence" value="ECO:0000250"/>
    <property type="project" value="UniProtKB"/>
</dbReference>
<dbReference type="GO" id="GO:0045202">
    <property type="term" value="C:synapse"/>
    <property type="evidence" value="ECO:0000266"/>
    <property type="project" value="RGD"/>
</dbReference>
<dbReference type="GO" id="GO:0003729">
    <property type="term" value="F:mRNA binding"/>
    <property type="evidence" value="ECO:0000266"/>
    <property type="project" value="RGD"/>
</dbReference>
<dbReference type="GO" id="GO:0019843">
    <property type="term" value="F:rRNA binding"/>
    <property type="evidence" value="ECO:0000318"/>
    <property type="project" value="GO_Central"/>
</dbReference>
<dbReference type="GO" id="GO:0003735">
    <property type="term" value="F:structural constituent of ribosome"/>
    <property type="evidence" value="ECO:0000266"/>
    <property type="project" value="RGD"/>
</dbReference>
<dbReference type="GO" id="GO:0006450">
    <property type="term" value="P:regulation of translational fidelity"/>
    <property type="evidence" value="ECO:0000266"/>
    <property type="project" value="RGD"/>
</dbReference>
<dbReference type="GO" id="GO:0000028">
    <property type="term" value="P:ribosomal small subunit assembly"/>
    <property type="evidence" value="ECO:0000318"/>
    <property type="project" value="GO_Central"/>
</dbReference>
<dbReference type="GO" id="GO:0042274">
    <property type="term" value="P:ribosomal small subunit biogenesis"/>
    <property type="evidence" value="ECO:0000250"/>
    <property type="project" value="UniProtKB"/>
</dbReference>
<dbReference type="GO" id="GO:0006412">
    <property type="term" value="P:translation"/>
    <property type="evidence" value="ECO:0000266"/>
    <property type="project" value="RGD"/>
</dbReference>
<dbReference type="CDD" id="cd14867">
    <property type="entry name" value="uS7_Eukaryote"/>
    <property type="match status" value="1"/>
</dbReference>
<dbReference type="FunFam" id="1.10.455.10:FF:000003">
    <property type="entry name" value="40S ribosomal protein S5"/>
    <property type="match status" value="1"/>
</dbReference>
<dbReference type="Gene3D" id="1.10.455.10">
    <property type="entry name" value="Ribosomal protein S7 domain"/>
    <property type="match status" value="1"/>
</dbReference>
<dbReference type="InterPro" id="IPR000235">
    <property type="entry name" value="Ribosomal_uS7"/>
</dbReference>
<dbReference type="InterPro" id="IPR020606">
    <property type="entry name" value="Ribosomal_uS7_CS"/>
</dbReference>
<dbReference type="InterPro" id="IPR023798">
    <property type="entry name" value="Ribosomal_uS7_dom"/>
</dbReference>
<dbReference type="InterPro" id="IPR036823">
    <property type="entry name" value="Ribosomal_uS7_dom_sf"/>
</dbReference>
<dbReference type="InterPro" id="IPR005716">
    <property type="entry name" value="Ribosomal_uS7_euk/arc"/>
</dbReference>
<dbReference type="NCBIfam" id="NF003106">
    <property type="entry name" value="PRK04027.1"/>
    <property type="match status" value="1"/>
</dbReference>
<dbReference type="NCBIfam" id="TIGR01028">
    <property type="entry name" value="uS7_euk_arch"/>
    <property type="match status" value="1"/>
</dbReference>
<dbReference type="PANTHER" id="PTHR11205">
    <property type="entry name" value="RIBOSOMAL PROTEIN S7"/>
    <property type="match status" value="1"/>
</dbReference>
<dbReference type="Pfam" id="PF00177">
    <property type="entry name" value="Ribosomal_S7"/>
    <property type="match status" value="1"/>
</dbReference>
<dbReference type="PIRSF" id="PIRSF002122">
    <property type="entry name" value="RPS7p_RPS7a_RPS5e_RPS7o"/>
    <property type="match status" value="1"/>
</dbReference>
<dbReference type="SUPFAM" id="SSF47973">
    <property type="entry name" value="Ribosomal protein S7"/>
    <property type="match status" value="1"/>
</dbReference>
<dbReference type="PROSITE" id="PS00052">
    <property type="entry name" value="RIBOSOMAL_S7"/>
    <property type="match status" value="1"/>
</dbReference>
<comment type="function">
    <text evidence="1">Component of the small ribosomal subunit. The ribosome is a large ribonucleoprotein complex responsible for the synthesis of proteins in the cell. Part of the small subunit (SSU) processome, first precursor of the small eukaryotic ribosomal subunit. During the assembly of the SSU processome in the nucleolus, many ribosome biogenesis factors, an RNA chaperone and ribosomal proteins associate with the nascent pre-rRNA and work in concert to generate RNA folding, modifications, rearrangements and cleavage as well as targeted degradation of pre-ribosomal RNA by the RNA exosome.</text>
</comment>
<comment type="subunit">
    <text evidence="1">Component of the small ribosomal subunit. Part of the small subunit (SSU) processome, composed of more than 70 proteins and the RNA chaperone small nucleolar RNA (snoRNA) U3.</text>
</comment>
<comment type="subcellular location">
    <subcellularLocation>
        <location evidence="1">Cytoplasm</location>
    </subcellularLocation>
    <subcellularLocation>
        <location evidence="1">Nucleus</location>
        <location evidence="1">Nucleolus</location>
    </subcellularLocation>
</comment>
<comment type="similarity">
    <text evidence="2">Belongs to the universal ribosomal protein uS7 family.</text>
</comment>
<name>RS5_RAT</name>
<protein>
    <recommendedName>
        <fullName evidence="2">Small ribosomal subunit protein uS7</fullName>
    </recommendedName>
    <alternativeName>
        <fullName>40S ribosomal protein S5</fullName>
    </alternativeName>
    <component>
        <recommendedName>
            <fullName>Small ribosomal subunit protein uS7, N-terminally processed</fullName>
        </recommendedName>
    </component>
</protein>
<evidence type="ECO:0000250" key="1">
    <source>
        <dbReference type="UniProtKB" id="P46782"/>
    </source>
</evidence>
<evidence type="ECO:0000305" key="2"/>
<sequence length="204" mass="22878">MTEWETATPAVAETPDIKLFGKWSTDDVQINDISLQDYIAVKEKYAKYLPHSAGRYAANGFRKAQCPIVERLTNSMMMHGRNNGKKLMTVRIVKHAFEIIHLLTGENPLQVLVNAIINSGPREDSTRIGRAGTVRRQAVDVSPLRRVNQAIWLLCTGAREAAFRNIKTIAECLADELINARKGSSNSYAIKKKDELERVAKSNR</sequence>
<feature type="chain" id="PRO_0000124528" description="Small ribosomal subunit protein uS7">
    <location>
        <begin position="1"/>
        <end position="204"/>
    </location>
</feature>
<feature type="initiator methionine" description="Removed; alternate" evidence="1">
    <location>
        <position position="1"/>
    </location>
</feature>
<feature type="chain" id="PRO_0000370371" description="Small ribosomal subunit protein uS7, N-terminally processed">
    <location>
        <begin position="2"/>
        <end position="204"/>
    </location>
</feature>
<feature type="modified residue" description="N-acetylmethionine" evidence="1">
    <location>
        <position position="1"/>
    </location>
</feature>
<feature type="modified residue" description="N-acetylthreonine; in 40S ribosomal protein S5, N-terminally processed" evidence="1">
    <location>
        <position position="2"/>
    </location>
</feature>
<feature type="modified residue" description="Phosphothreonine" evidence="1">
    <location>
        <position position="14"/>
    </location>
</feature>
<feature type="modified residue" description="N6-acetyllysine; alternate" evidence="1">
    <location>
        <position position="47"/>
    </location>
</feature>
<feature type="modified residue" description="Phosphoserine" evidence="1">
    <location>
        <position position="142"/>
    </location>
</feature>
<feature type="cross-link" description="Glycyl lysine isopeptide (Lys-Gly) (interchain with G-Cter in SUMO2); alternate" evidence="1">
    <location>
        <position position="47"/>
    </location>
</feature>
<reference key="1">
    <citation type="journal article" date="1992" name="J. Biol. Chem.">
        <title>The primary structure of rat ribosomal protein S5. A ribosomal protein present in the rat genome in a single copy.</title>
        <authorList>
            <person name="Kuwano Y."/>
            <person name="Olvera J."/>
            <person name="Wool I.G."/>
        </authorList>
    </citation>
    <scope>NUCLEOTIDE SEQUENCE [MRNA]</scope>
    <scope>PROTEIN SEQUENCE OF 6-22</scope>
    <source>
        <strain>Sprague-Dawley</strain>
        <tissue>Liver</tissue>
    </source>
</reference>
<accession>P24050</accession>
<keyword id="KW-0007">Acetylation</keyword>
<keyword id="KW-0963">Cytoplasm</keyword>
<keyword id="KW-0903">Direct protein sequencing</keyword>
<keyword id="KW-1017">Isopeptide bond</keyword>
<keyword id="KW-0539">Nucleus</keyword>
<keyword id="KW-0597">Phosphoprotein</keyword>
<keyword id="KW-1185">Reference proteome</keyword>
<keyword id="KW-0687">Ribonucleoprotein</keyword>
<keyword id="KW-0689">Ribosomal protein</keyword>
<keyword id="KW-0832">Ubl conjugation</keyword>
<organism>
    <name type="scientific">Rattus norvegicus</name>
    <name type="common">Rat</name>
    <dbReference type="NCBI Taxonomy" id="10116"/>
    <lineage>
        <taxon>Eukaryota</taxon>
        <taxon>Metazoa</taxon>
        <taxon>Chordata</taxon>
        <taxon>Craniata</taxon>
        <taxon>Vertebrata</taxon>
        <taxon>Euteleostomi</taxon>
        <taxon>Mammalia</taxon>
        <taxon>Eutheria</taxon>
        <taxon>Euarchontoglires</taxon>
        <taxon>Glires</taxon>
        <taxon>Rodentia</taxon>
        <taxon>Myomorpha</taxon>
        <taxon>Muroidea</taxon>
        <taxon>Muridae</taxon>
        <taxon>Murinae</taxon>
        <taxon>Rattus</taxon>
    </lineage>
</organism>